<proteinExistence type="evidence at protein level"/>
<sequence>MAASSSSGRRRYDVFPSFSGVDVRKTFLSHLIEALDGKSINTFIDHGIERSRTIAPELISAIREARISIVIFSKNYASSTWCLNELVEIHKCFNDLGQMVIPVFYDVDPSEVRKQTGEFGKVFEKTCEVSKDKQPGDQKQRWVQALTDIANIAGEDLLNGPNEAHMVEKISNDVSNKLITRSKCFDDFVGIEAHIEAIKSVLCLESKEARMVGIWGQSGIGKSTIGRALFSQLSIQFPLRAFLTYKSTSGSDVSGMKLSWEKELLSEILGQKDIKIEHFGVVEQRLKHKKVLILLDDVDNLEFLKTLVGKAEWFGSGSRIIVITQDRQFLKAHDIDLVYEVKLPSQGLALTMLCRSAFGKDSPPDDFKELAFEVAKLAGHLPLGLNVLGSSLRRRGKKEWMEMMPRLRNGLNGDIMKTLRVSYDRLHQKDQDMFLCIACLFNGFEVSYVKDLLEDNVGLTMLSEKSLIRITPDGHIEMHNLLEKLGREIDRAKSKGNPGKRQFLTNFEDIHEVVTEKTGTETLLGIRLPFEEYFSTRPLLIDKESFKGMRNLQYLKIGDWSDGGQPQSLVYLPLKLRLLDWDDCPLKSLPSTFKAEYLVNLIMKYSKLEKLWEGTLPLGSLKKMNLLCSKNLKEIPDLSNARNLEELDLEGCESLVTLPSSIQNAIKLRKLHCSGVILIDLKSLEGMCNLEYLSVDCSRVEGTQGIVYFPSKLRLLLWNNCPLKRLHSNFKVEYLVKLRMENSDLEKLWDGTQPLGRLKQMFLRGSKYLKEIPDLSLAINLEEVDICKCESLVTFPSSMQNAIKLIYLDISDCKKLESFPTDLNLESLEYLNLTGCPNLRNFPAIKMGCSDVDFPEGRNEIVVEDCFWNKNLPAGLDYLDCLMRCMPCEFRPEYLVFLNVRCYKHEKLWEGIQSLGSLEEMDLSESENLTEIPDLSKATNLKHLYLNNCKSLVTLPSTIGNLQKLVRLEMKECTGLEVLPTDVNLSSLETLDLSGCSSLRTFPLISKSIKWLYLENTAIEEILDLSKATKLESLILNNCKSLVTLPSTIGNLQNLRRLYMKRCTGLEVLPTDVNLSSLGILDLSGCSSLRTFPLISTNIVWLYLENTAIGEVPCCIEDFTRLRVLLMYCCQRLKNISPNIFRLRSLMFADFTDCRGVIKALSDATVVATMEDSVSCVPLSENIEYTCERFWGELYGDGDWDLGTEYFSFRNCFKLDRDARELILRSCFKPVALPGGEIPKYFTYRAYGDSLTVTLPRSSLSQSFLRFKACLVVDPLSEGKGFYRYLEVNFGFNGKQYQKSFLEDEELEFCKTDHLFFCSFKFESEMTFNDVEFKFCCSNRIKECGVRLMYVSQETEYNQQTTRSKKRMRMTSGTSEEYINLAGDQIVADTGLAALNMELSLGEGEASSSTSLEGEALSVDYMITKEQDEDIPFLDPVSDGTWRSFYSAE</sequence>
<evidence type="ECO:0000255" key="1"/>
<evidence type="ECO:0000255" key="2">
    <source>
        <dbReference type="PROSITE-ProRule" id="PRU00204"/>
    </source>
</evidence>
<evidence type="ECO:0000269" key="3">
    <source>
    </source>
</evidence>
<evidence type="ECO:0000269" key="4">
    <source>
    </source>
</evidence>
<evidence type="ECO:0000303" key="5">
    <source>
    </source>
</evidence>
<evidence type="ECO:0000305" key="6"/>
<evidence type="ECO:0000312" key="7">
    <source>
        <dbReference type="Araport" id="AT4G16950"/>
    </source>
</evidence>
<evidence type="ECO:0000312" key="8">
    <source>
        <dbReference type="EMBL" id="CAB46048.1"/>
    </source>
</evidence>
<reference key="1">
    <citation type="journal article" date="1998" name="Nature">
        <title>Analysis of 1.9 Mb of contiguous sequence from chromosome 4 of Arabidopsis thaliana.</title>
        <authorList>
            <person name="Bevan M."/>
            <person name="Bancroft I."/>
            <person name="Bent E."/>
            <person name="Love K."/>
            <person name="Goodman H.M."/>
            <person name="Dean C."/>
            <person name="Bergkamp R."/>
            <person name="Dirkse W."/>
            <person name="van Staveren M."/>
            <person name="Stiekema W."/>
            <person name="Drost L."/>
            <person name="Ridley P."/>
            <person name="Hudson S.-A."/>
            <person name="Patel K."/>
            <person name="Murphy G."/>
            <person name="Piffanelli P."/>
            <person name="Wedler H."/>
            <person name="Wedler E."/>
            <person name="Wambutt R."/>
            <person name="Weitzenegger T."/>
            <person name="Pohl T."/>
            <person name="Terryn N."/>
            <person name="Gielen J."/>
            <person name="Villarroel R."/>
            <person name="De Clercq R."/>
            <person name="van Montagu M."/>
            <person name="Lecharny A."/>
            <person name="Aubourg S."/>
            <person name="Gy I."/>
            <person name="Kreis M."/>
            <person name="Lao N."/>
            <person name="Kavanagh T."/>
            <person name="Hempel S."/>
            <person name="Kotter P."/>
            <person name="Entian K.-D."/>
            <person name="Rieger M."/>
            <person name="Schaefer M."/>
            <person name="Funk B."/>
            <person name="Mueller-Auer S."/>
            <person name="Silvey M."/>
            <person name="James R."/>
            <person name="Monfort A."/>
            <person name="Pons A."/>
            <person name="Puigdomenech P."/>
            <person name="Douka A."/>
            <person name="Voukelatou E."/>
            <person name="Milioni D."/>
            <person name="Hatzopoulos P."/>
            <person name="Piravandi E."/>
            <person name="Obermaier B."/>
            <person name="Hilbert H."/>
            <person name="Duesterhoeft A."/>
            <person name="Moores T."/>
            <person name="Jones J.D.G."/>
            <person name="Eneva T."/>
            <person name="Palme K."/>
            <person name="Benes V."/>
            <person name="Rechmann S."/>
            <person name="Ansorge W."/>
            <person name="Cooke R."/>
            <person name="Berger C."/>
            <person name="Delseny M."/>
            <person name="Voet M."/>
            <person name="Volckaert G."/>
            <person name="Mewes H.-W."/>
            <person name="Klosterman S."/>
            <person name="Schueller C."/>
            <person name="Chalwatzis N."/>
        </authorList>
    </citation>
    <scope>NUCLEOTIDE SEQUENCE [LARGE SCALE GENOMIC DNA]</scope>
    <source>
        <strain>cv. Columbia</strain>
    </source>
</reference>
<reference key="2">
    <citation type="journal article" date="1999" name="Nature">
        <title>Sequence and analysis of chromosome 4 of the plant Arabidopsis thaliana.</title>
        <authorList>
            <person name="Mayer K.F.X."/>
            <person name="Schueller C."/>
            <person name="Wambutt R."/>
            <person name="Murphy G."/>
            <person name="Volckaert G."/>
            <person name="Pohl T."/>
            <person name="Duesterhoeft A."/>
            <person name="Stiekema W."/>
            <person name="Entian K.-D."/>
            <person name="Terryn N."/>
            <person name="Harris B."/>
            <person name="Ansorge W."/>
            <person name="Brandt P."/>
            <person name="Grivell L.A."/>
            <person name="Rieger M."/>
            <person name="Weichselgartner M."/>
            <person name="de Simone V."/>
            <person name="Obermaier B."/>
            <person name="Mache R."/>
            <person name="Mueller M."/>
            <person name="Kreis M."/>
            <person name="Delseny M."/>
            <person name="Puigdomenech P."/>
            <person name="Watson M."/>
            <person name="Schmidtheini T."/>
            <person name="Reichert B."/>
            <person name="Portetelle D."/>
            <person name="Perez-Alonso M."/>
            <person name="Boutry M."/>
            <person name="Bancroft I."/>
            <person name="Vos P."/>
            <person name="Hoheisel J."/>
            <person name="Zimmermann W."/>
            <person name="Wedler H."/>
            <person name="Ridley P."/>
            <person name="Langham S.-A."/>
            <person name="McCullagh B."/>
            <person name="Bilham L."/>
            <person name="Robben J."/>
            <person name="van der Schueren J."/>
            <person name="Grymonprez B."/>
            <person name="Chuang Y.-J."/>
            <person name="Vandenbussche F."/>
            <person name="Braeken M."/>
            <person name="Weltjens I."/>
            <person name="Voet M."/>
            <person name="Bastiaens I."/>
            <person name="Aert R."/>
            <person name="Defoor E."/>
            <person name="Weitzenegger T."/>
            <person name="Bothe G."/>
            <person name="Ramsperger U."/>
            <person name="Hilbert H."/>
            <person name="Braun M."/>
            <person name="Holzer E."/>
            <person name="Brandt A."/>
            <person name="Peters S."/>
            <person name="van Staveren M."/>
            <person name="Dirkse W."/>
            <person name="Mooijman P."/>
            <person name="Klein Lankhorst R."/>
            <person name="Rose M."/>
            <person name="Hauf J."/>
            <person name="Koetter P."/>
            <person name="Berneiser S."/>
            <person name="Hempel S."/>
            <person name="Feldpausch M."/>
            <person name="Lamberth S."/>
            <person name="Van den Daele H."/>
            <person name="De Keyser A."/>
            <person name="Buysshaert C."/>
            <person name="Gielen J."/>
            <person name="Villarroel R."/>
            <person name="De Clercq R."/>
            <person name="van Montagu M."/>
            <person name="Rogers J."/>
            <person name="Cronin A."/>
            <person name="Quail M.A."/>
            <person name="Bray-Allen S."/>
            <person name="Clark L."/>
            <person name="Doggett J."/>
            <person name="Hall S."/>
            <person name="Kay M."/>
            <person name="Lennard N."/>
            <person name="McLay K."/>
            <person name="Mayes R."/>
            <person name="Pettett A."/>
            <person name="Rajandream M.A."/>
            <person name="Lyne M."/>
            <person name="Benes V."/>
            <person name="Rechmann S."/>
            <person name="Borkova D."/>
            <person name="Bloecker H."/>
            <person name="Scharfe M."/>
            <person name="Grimm M."/>
            <person name="Loehnert T.-H."/>
            <person name="Dose S."/>
            <person name="de Haan M."/>
            <person name="Maarse A.C."/>
            <person name="Schaefer M."/>
            <person name="Mueller-Auer S."/>
            <person name="Gabel C."/>
            <person name="Fuchs M."/>
            <person name="Fartmann B."/>
            <person name="Granderath K."/>
            <person name="Dauner D."/>
            <person name="Herzl A."/>
            <person name="Neumann S."/>
            <person name="Argiriou A."/>
            <person name="Vitale D."/>
            <person name="Liguori R."/>
            <person name="Piravandi E."/>
            <person name="Massenet O."/>
            <person name="Quigley F."/>
            <person name="Clabauld G."/>
            <person name="Muendlein A."/>
            <person name="Felber R."/>
            <person name="Schnabl S."/>
            <person name="Hiller R."/>
            <person name="Schmidt W."/>
            <person name="Lecharny A."/>
            <person name="Aubourg S."/>
            <person name="Chefdor F."/>
            <person name="Cooke R."/>
            <person name="Berger C."/>
            <person name="Monfort A."/>
            <person name="Casacuberta E."/>
            <person name="Gibbons T."/>
            <person name="Weber N."/>
            <person name="Vandenbol M."/>
            <person name="Bargues M."/>
            <person name="Terol J."/>
            <person name="Torres A."/>
            <person name="Perez-Perez A."/>
            <person name="Purnelle B."/>
            <person name="Bent E."/>
            <person name="Johnson S."/>
            <person name="Tacon D."/>
            <person name="Jesse T."/>
            <person name="Heijnen L."/>
            <person name="Schwarz S."/>
            <person name="Scholler P."/>
            <person name="Heber S."/>
            <person name="Francs P."/>
            <person name="Bielke C."/>
            <person name="Frishman D."/>
            <person name="Haase D."/>
            <person name="Lemcke K."/>
            <person name="Mewes H.-W."/>
            <person name="Stocker S."/>
            <person name="Zaccaria P."/>
            <person name="Bevan M."/>
            <person name="Wilson R.K."/>
            <person name="de la Bastide M."/>
            <person name="Habermann K."/>
            <person name="Parnell L."/>
            <person name="Dedhia N."/>
            <person name="Gnoj L."/>
            <person name="Schutz K."/>
            <person name="Huang E."/>
            <person name="Spiegel L."/>
            <person name="Sekhon M."/>
            <person name="Murray J."/>
            <person name="Sheet P."/>
            <person name="Cordes M."/>
            <person name="Abu-Threideh J."/>
            <person name="Stoneking T."/>
            <person name="Kalicki J."/>
            <person name="Graves T."/>
            <person name="Harmon G."/>
            <person name="Edwards J."/>
            <person name="Latreille P."/>
            <person name="Courtney L."/>
            <person name="Cloud J."/>
            <person name="Abbott A."/>
            <person name="Scott K."/>
            <person name="Johnson D."/>
            <person name="Minx P."/>
            <person name="Bentley D."/>
            <person name="Fulton B."/>
            <person name="Miller N."/>
            <person name="Greco T."/>
            <person name="Kemp K."/>
            <person name="Kramer J."/>
            <person name="Fulton L."/>
            <person name="Mardis E."/>
            <person name="Dante M."/>
            <person name="Pepin K."/>
            <person name="Hillier L.W."/>
            <person name="Nelson J."/>
            <person name="Spieth J."/>
            <person name="Ryan E."/>
            <person name="Andrews S."/>
            <person name="Geisel C."/>
            <person name="Layman D."/>
            <person name="Du H."/>
            <person name="Ali J."/>
            <person name="Berghoff A."/>
            <person name="Jones K."/>
            <person name="Drone K."/>
            <person name="Cotton M."/>
            <person name="Joshu C."/>
            <person name="Antonoiu B."/>
            <person name="Zidanic M."/>
            <person name="Strong C."/>
            <person name="Sun H."/>
            <person name="Lamar B."/>
            <person name="Yordan C."/>
            <person name="Ma P."/>
            <person name="Zhong J."/>
            <person name="Preston R."/>
            <person name="Vil D."/>
            <person name="Shekher M."/>
            <person name="Matero A."/>
            <person name="Shah R."/>
            <person name="Swaby I.K."/>
            <person name="O'Shaughnessy A."/>
            <person name="Rodriguez M."/>
            <person name="Hoffman J."/>
            <person name="Till S."/>
            <person name="Granat S."/>
            <person name="Shohdy N."/>
            <person name="Hasegawa A."/>
            <person name="Hameed A."/>
            <person name="Lodhi M."/>
            <person name="Johnson A."/>
            <person name="Chen E."/>
            <person name="Marra M.A."/>
            <person name="Martienssen R."/>
            <person name="McCombie W.R."/>
        </authorList>
    </citation>
    <scope>NUCLEOTIDE SEQUENCE [LARGE SCALE GENOMIC DNA]</scope>
    <source>
        <strain>cv. Columbia</strain>
    </source>
</reference>
<reference key="3">
    <citation type="journal article" date="2017" name="Plant J.">
        <title>Araport11: a complete reannotation of the Arabidopsis thaliana reference genome.</title>
        <authorList>
            <person name="Cheng C.Y."/>
            <person name="Krishnakumar V."/>
            <person name="Chan A.P."/>
            <person name="Thibaud-Nissen F."/>
            <person name="Schobel S."/>
            <person name="Town C.D."/>
        </authorList>
    </citation>
    <scope>GENOME REANNOTATION</scope>
    <source>
        <strain>cv. Columbia</strain>
    </source>
</reference>
<reference key="4">
    <citation type="submission" date="2006-07" db="EMBL/GenBank/DDBJ databases">
        <title>Large-scale analysis of RIKEN Arabidopsis full-length (RAFL) cDNAs.</title>
        <authorList>
            <person name="Totoki Y."/>
            <person name="Seki M."/>
            <person name="Ishida J."/>
            <person name="Nakajima M."/>
            <person name="Enju A."/>
            <person name="Kamiya A."/>
            <person name="Narusaka M."/>
            <person name="Shin-i T."/>
            <person name="Nakagawa M."/>
            <person name="Sakamoto N."/>
            <person name="Oishi K."/>
            <person name="Kohara Y."/>
            <person name="Kobayashi M."/>
            <person name="Toyoda A."/>
            <person name="Sakaki Y."/>
            <person name="Sakurai T."/>
            <person name="Iida K."/>
            <person name="Akiyama K."/>
            <person name="Satou M."/>
            <person name="Toyoda T."/>
            <person name="Konagaya A."/>
            <person name="Carninci P."/>
            <person name="Kawai J."/>
            <person name="Hayashizaki Y."/>
            <person name="Shinozaki K."/>
        </authorList>
    </citation>
    <scope>NUCLEOTIDE SEQUENCE [LARGE SCALE MRNA] OF 549-1374</scope>
    <source>
        <strain>cv. Columbia</strain>
    </source>
</reference>
<reference key="5">
    <citation type="journal article" date="2009" name="DNA Res.">
        <title>Analysis of multiple occurrences of alternative splicing events in Arabidopsis thaliana using novel sequenced full-length cDNAs.</title>
        <authorList>
            <person name="Iida K."/>
            <person name="Fukami-Kobayashi K."/>
            <person name="Toyoda A."/>
            <person name="Sakaki Y."/>
            <person name="Kobayashi M."/>
            <person name="Seki M."/>
            <person name="Shinozaki K."/>
        </authorList>
    </citation>
    <scope>NUCLEOTIDE SEQUENCE [LARGE SCALE MRNA] OF 804-1449</scope>
    <source>
        <strain>cv. Columbia</strain>
    </source>
</reference>
<reference key="6">
    <citation type="journal article" date="1997" name="Plant Cell">
        <title>The Arabidopsis downy mildew resistance gene RPP5 shares similarity to the toll and interleukin-1 receptors with N and L6.</title>
        <authorList>
            <person name="Parker J.E."/>
            <person name="Coleman M.J."/>
            <person name="Szabo V."/>
            <person name="Frost L.N."/>
            <person name="Schmidt R."/>
            <person name="van der Biezen E.A."/>
            <person name="Moores T."/>
            <person name="Dean C."/>
            <person name="Daniels M.J."/>
            <person name="Jones J.D."/>
        </authorList>
    </citation>
    <scope>FUNCTION</scope>
</reference>
<reference key="7">
    <citation type="journal article" date="2000" name="Proc. Natl. Acad. Sci. U.S.A.">
        <title>Arabidopsis RelA/SpoT homologs implicate (p)ppGpp in plant signaling.</title>
        <authorList>
            <person name="van der Biezen E.A."/>
            <person name="Sun J."/>
            <person name="Coleman M.J."/>
            <person name="Bibb M.J."/>
            <person name="Jones J.D."/>
        </authorList>
    </citation>
    <scope>INTERACTION WITH RSH1</scope>
</reference>
<reference key="8">
    <citation type="journal article" date="2002" name="Plant J.">
        <title>Arabidopsis RPP4 is a member of the RPP5 multigene family of TIR-NB-LRR genes and confers downy mildew resistance through multiple signalling components.</title>
        <authorList>
            <person name="van der Biezen E.A."/>
            <person name="Freddie C.T."/>
            <person name="Kahn K."/>
            <person name="Parker J.E."/>
            <person name="Jones J.D."/>
        </authorList>
    </citation>
    <scope>FUNCTION</scope>
    <scope>INTERACTION WITH RSH1</scope>
</reference>
<gene>
    <name evidence="5" type="primary">RPP5</name>
    <name evidence="7" type="ordered locus">At4g16950</name>
    <name evidence="8" type="ORF">dl4505c</name>
</gene>
<organism>
    <name type="scientific">Arabidopsis thaliana</name>
    <name type="common">Mouse-ear cress</name>
    <dbReference type="NCBI Taxonomy" id="3702"/>
    <lineage>
        <taxon>Eukaryota</taxon>
        <taxon>Viridiplantae</taxon>
        <taxon>Streptophyta</taxon>
        <taxon>Embryophyta</taxon>
        <taxon>Tracheophyta</taxon>
        <taxon>Spermatophyta</taxon>
        <taxon>Magnoliopsida</taxon>
        <taxon>eudicotyledons</taxon>
        <taxon>Gunneridae</taxon>
        <taxon>Pentapetalae</taxon>
        <taxon>rosids</taxon>
        <taxon>malvids</taxon>
        <taxon>Brassicales</taxon>
        <taxon>Brassicaceae</taxon>
        <taxon>Camelineae</taxon>
        <taxon>Arabidopsis</taxon>
    </lineage>
</organism>
<accession>F4JNB7</accession>
<accession>B9DG46</accession>
<accession>O23535</accession>
<accession>Q0WV14</accession>
<comment type="function">
    <text>TIR-NB-LRR receptor-like protein that confers resistance to the pathogen Hyaloperonospora arabidopsis isolate Noco2 (downy mildew disease) (PubMed:9212464). Confers resistance to H.arabidopsis isolates Emoy2, Emwa1 and Noco2 (PubMed:11846877).</text>
</comment>
<comment type="catalytic activity">
    <reaction evidence="2">
        <text>NAD(+) + H2O = ADP-D-ribose + nicotinamide + H(+)</text>
        <dbReference type="Rhea" id="RHEA:16301"/>
        <dbReference type="ChEBI" id="CHEBI:15377"/>
        <dbReference type="ChEBI" id="CHEBI:15378"/>
        <dbReference type="ChEBI" id="CHEBI:17154"/>
        <dbReference type="ChEBI" id="CHEBI:57540"/>
        <dbReference type="ChEBI" id="CHEBI:57967"/>
        <dbReference type="EC" id="3.2.2.6"/>
    </reaction>
    <physiologicalReaction direction="left-to-right" evidence="2">
        <dbReference type="Rhea" id="RHEA:16302"/>
    </physiologicalReaction>
</comment>
<comment type="subunit">
    <text evidence="3 4">Interacts with RSH1.</text>
</comment>
<comment type="alternative products">
    <event type="alternative splicing"/>
    <isoform>
        <id>F4JNB7-1</id>
        <name>1</name>
        <sequence type="displayed"/>
    </isoform>
    <text evidence="6">A number of isoforms are produced. According EST sequences.</text>
</comment>
<comment type="domain">
    <text evidence="2">The TIR domain mediates NAD(+) hydrolase (NADase) activity. Self-association of TIR domains is required for NADase activity.</text>
</comment>
<comment type="sequence caution" evidence="6">
    <conflict type="erroneous gene model prediction">
        <sequence resource="EMBL-CDS" id="CAB46048"/>
    </conflict>
</comment>
<comment type="sequence caution" evidence="6">
    <conflict type="erroneous gene model prediction">
        <sequence resource="EMBL-CDS" id="CAB80966"/>
    </conflict>
</comment>
<keyword id="KW-0025">Alternative splicing</keyword>
<keyword id="KW-0067">ATP-binding</keyword>
<keyword id="KW-0378">Hydrolase</keyword>
<keyword id="KW-0433">Leucine-rich repeat</keyword>
<keyword id="KW-0520">NAD</keyword>
<keyword id="KW-0547">Nucleotide-binding</keyword>
<keyword id="KW-0611">Plant defense</keyword>
<keyword id="KW-1185">Reference proteome</keyword>
<keyword id="KW-0677">Repeat</keyword>
<feature type="chain" id="PRO_0000433380" description="Disease resistance protein RPP5">
    <location>
        <begin position="1"/>
        <end position="1449"/>
    </location>
</feature>
<feature type="domain" description="TIR" evidence="2">
    <location>
        <begin position="10"/>
        <end position="178"/>
    </location>
</feature>
<feature type="domain" description="NB-ARC" evidence="1">
    <location>
        <begin position="192"/>
        <end position="446"/>
    </location>
</feature>
<feature type="repeat" description="LRR 1" evidence="1">
    <location>
        <begin position="549"/>
        <end position="573"/>
    </location>
</feature>
<feature type="repeat" description="LRR 2" evidence="1">
    <location>
        <begin position="574"/>
        <end position="595"/>
    </location>
</feature>
<feature type="repeat" description="LRR 3" evidence="1">
    <location>
        <begin position="597"/>
        <end position="618"/>
    </location>
</feature>
<feature type="repeat" description="LRR 4" evidence="1">
    <location>
        <begin position="619"/>
        <end position="642"/>
    </location>
</feature>
<feature type="repeat" description="LRR 5" evidence="1">
    <location>
        <begin position="644"/>
        <end position="665"/>
    </location>
</feature>
<feature type="repeat" description="LRR 6" evidence="1">
    <location>
        <begin position="687"/>
        <end position="710"/>
    </location>
</feature>
<feature type="repeat" description="LRR 7" evidence="1">
    <location>
        <begin position="712"/>
        <end position="732"/>
    </location>
</feature>
<feature type="repeat" description="LRR 8" evidence="1">
    <location>
        <begin position="733"/>
        <end position="755"/>
    </location>
</feature>
<feature type="repeat" description="LRR 9" evidence="1">
    <location>
        <begin position="756"/>
        <end position="779"/>
    </location>
</feature>
<feature type="repeat" description="LRR 10" evidence="1">
    <location>
        <begin position="802"/>
        <end position="825"/>
    </location>
</feature>
<feature type="repeat" description="LRR 11" evidence="1">
    <location>
        <begin position="826"/>
        <end position="849"/>
    </location>
</feature>
<feature type="repeat" description="LRR 12" evidence="1">
    <location>
        <begin position="915"/>
        <end position="939"/>
    </location>
</feature>
<feature type="repeat" description="LRR 13" evidence="1">
    <location>
        <begin position="941"/>
        <end position="962"/>
    </location>
</feature>
<feature type="repeat" description="LRR 14" evidence="1">
    <location>
        <begin position="963"/>
        <end position="985"/>
    </location>
</feature>
<feature type="repeat" description="LRR 15" evidence="1">
    <location>
        <begin position="986"/>
        <end position="1011"/>
    </location>
</feature>
<feature type="repeat" description="LRR 16" evidence="1">
    <location>
        <begin position="1028"/>
        <end position="1052"/>
    </location>
</feature>
<feature type="repeat" description="LRR 17" evidence="1">
    <location>
        <begin position="1053"/>
        <end position="1077"/>
    </location>
</feature>
<feature type="repeat" description="LRR 18" evidence="1">
    <location>
        <begin position="1096"/>
        <end position="1119"/>
    </location>
</feature>
<feature type="repeat" description="LRR 19" evidence="1">
    <location>
        <begin position="1120"/>
        <end position="1143"/>
    </location>
</feature>
<feature type="active site" evidence="2">
    <location>
        <position position="85"/>
    </location>
</feature>
<feature type="sequence conflict" description="In Ref. 5; BAH19713." evidence="6" ref="5">
    <original>E</original>
    <variation>K</variation>
    <location>
        <position position="972"/>
    </location>
</feature>
<protein>
    <recommendedName>
        <fullName evidence="6">Disease resistance protein RPP5</fullName>
        <ecNumber evidence="2">3.2.2.6</ecNumber>
    </recommendedName>
    <alternativeName>
        <fullName evidence="5">Protein RECOGNITION OF PERONOSPORA PARASITICA 5</fullName>
    </alternativeName>
</protein>
<name>RPP5_ARATH</name>
<dbReference type="EC" id="3.2.2.6" evidence="2"/>
<dbReference type="EMBL" id="Z97342">
    <property type="protein sequence ID" value="CAB46048.1"/>
    <property type="status" value="ALT_SEQ"/>
    <property type="molecule type" value="Genomic_DNA"/>
</dbReference>
<dbReference type="EMBL" id="AL161545">
    <property type="protein sequence ID" value="CAB80966.1"/>
    <property type="status" value="ALT_SEQ"/>
    <property type="molecule type" value="Genomic_DNA"/>
</dbReference>
<dbReference type="EMBL" id="CP002687">
    <property type="protein sequence ID" value="AEE83826.1"/>
    <property type="molecule type" value="Genomic_DNA"/>
</dbReference>
<dbReference type="EMBL" id="AK226966">
    <property type="protein sequence ID" value="BAE99034.1"/>
    <property type="molecule type" value="mRNA"/>
</dbReference>
<dbReference type="EMBL" id="AK317019">
    <property type="protein sequence ID" value="BAH19713.1"/>
    <property type="molecule type" value="mRNA"/>
</dbReference>
<dbReference type="PIR" id="B85189">
    <property type="entry name" value="B85189"/>
</dbReference>
<dbReference type="RefSeq" id="NP_193428.2">
    <molecule id="F4JNB7-1"/>
    <property type="nucleotide sequence ID" value="NM_117798.4"/>
</dbReference>
<dbReference type="SMR" id="F4JNB7"/>
<dbReference type="FunCoup" id="F4JNB7">
    <property type="interactions" value="47"/>
</dbReference>
<dbReference type="STRING" id="3702.F4JNB7"/>
<dbReference type="iPTMnet" id="F4JNB7"/>
<dbReference type="PaxDb" id="3702-AT4G16950.1"/>
<dbReference type="ProteomicsDB" id="226559">
    <molecule id="F4JNB7-1"/>
</dbReference>
<dbReference type="EnsemblPlants" id="AT4G16950.1">
    <molecule id="F4JNB7-1"/>
    <property type="protein sequence ID" value="AT4G16950.1"/>
    <property type="gene ID" value="AT4G16950"/>
</dbReference>
<dbReference type="GeneID" id="827403"/>
<dbReference type="Gramene" id="AT4G16950.1">
    <molecule id="F4JNB7-1"/>
    <property type="protein sequence ID" value="AT4G16950.1"/>
    <property type="gene ID" value="AT4G16950"/>
</dbReference>
<dbReference type="KEGG" id="ath:AT4G16950"/>
<dbReference type="Araport" id="AT4G16950"/>
<dbReference type="TAIR" id="AT4G16950">
    <property type="gene designation" value="RPP5"/>
</dbReference>
<dbReference type="eggNOG" id="ENOG502QQJE">
    <property type="taxonomic scope" value="Eukaryota"/>
</dbReference>
<dbReference type="InParanoid" id="F4JNB7"/>
<dbReference type="PhylomeDB" id="F4JNB7"/>
<dbReference type="PRO" id="PR:F4JNB7"/>
<dbReference type="Proteomes" id="UP000006548">
    <property type="component" value="Chromosome 4"/>
</dbReference>
<dbReference type="ExpressionAtlas" id="F4JNB7">
    <property type="expression patterns" value="baseline and differential"/>
</dbReference>
<dbReference type="GO" id="GO:0043531">
    <property type="term" value="F:ADP binding"/>
    <property type="evidence" value="ECO:0007669"/>
    <property type="project" value="InterPro"/>
</dbReference>
<dbReference type="GO" id="GO:0005524">
    <property type="term" value="F:ATP binding"/>
    <property type="evidence" value="ECO:0007669"/>
    <property type="project" value="UniProtKB-KW"/>
</dbReference>
<dbReference type="GO" id="GO:0061809">
    <property type="term" value="F:NAD+ nucleosidase activity, cyclic ADP-ribose generating"/>
    <property type="evidence" value="ECO:0007669"/>
    <property type="project" value="UniProtKB-EC"/>
</dbReference>
<dbReference type="GO" id="GO:0000166">
    <property type="term" value="F:nucleotide binding"/>
    <property type="evidence" value="ECO:0000304"/>
    <property type="project" value="TAIR"/>
</dbReference>
<dbReference type="GO" id="GO:0006952">
    <property type="term" value="P:defense response"/>
    <property type="evidence" value="ECO:0000304"/>
    <property type="project" value="TAIR"/>
</dbReference>
<dbReference type="GO" id="GO:0050832">
    <property type="term" value="P:defense response to fungus"/>
    <property type="evidence" value="ECO:0000315"/>
    <property type="project" value="TAIR"/>
</dbReference>
<dbReference type="GO" id="GO:0007165">
    <property type="term" value="P:signal transduction"/>
    <property type="evidence" value="ECO:0007669"/>
    <property type="project" value="InterPro"/>
</dbReference>
<dbReference type="FunFam" id="1.10.8.430:FF:000002">
    <property type="entry name" value="Disease resistance protein (TIR-NBS-LRR class)"/>
    <property type="match status" value="1"/>
</dbReference>
<dbReference type="FunFam" id="3.40.50.10140:FF:000007">
    <property type="entry name" value="Disease resistance protein (TIR-NBS-LRR class)"/>
    <property type="match status" value="1"/>
</dbReference>
<dbReference type="FunFam" id="3.40.50.300:FF:001002">
    <property type="entry name" value="Disease resistance protein (TIR-NBS-LRR class)"/>
    <property type="match status" value="1"/>
</dbReference>
<dbReference type="FunFam" id="3.80.10.10:FF:000359">
    <property type="entry name" value="Disease resistance protein (TIR-NBS-LRR class) family"/>
    <property type="match status" value="2"/>
</dbReference>
<dbReference type="FunFam" id="3.80.10.10:FF:000757">
    <property type="entry name" value="Disease resistance protein (TIR-NBS-LRR class) family"/>
    <property type="match status" value="1"/>
</dbReference>
<dbReference type="Gene3D" id="1.10.8.430">
    <property type="entry name" value="Helical domain of apoptotic protease-activating factors"/>
    <property type="match status" value="1"/>
</dbReference>
<dbReference type="Gene3D" id="3.40.50.300">
    <property type="entry name" value="P-loop containing nucleotide triphosphate hydrolases"/>
    <property type="match status" value="1"/>
</dbReference>
<dbReference type="Gene3D" id="3.80.10.10">
    <property type="entry name" value="Ribonuclease Inhibitor"/>
    <property type="match status" value="5"/>
</dbReference>
<dbReference type="Gene3D" id="3.40.50.10140">
    <property type="entry name" value="Toll/interleukin-1 receptor homology (TIR) domain"/>
    <property type="match status" value="1"/>
</dbReference>
<dbReference type="InterPro" id="IPR042197">
    <property type="entry name" value="Apaf_helical"/>
</dbReference>
<dbReference type="InterPro" id="IPR045344">
    <property type="entry name" value="C-JID"/>
</dbReference>
<dbReference type="InterPro" id="IPR044974">
    <property type="entry name" value="Disease_R_plants"/>
</dbReference>
<dbReference type="InterPro" id="IPR001611">
    <property type="entry name" value="Leu-rich_rpt"/>
</dbReference>
<dbReference type="InterPro" id="IPR011713">
    <property type="entry name" value="Leu-rich_rpt_3"/>
</dbReference>
<dbReference type="InterPro" id="IPR032675">
    <property type="entry name" value="LRR_dom_sf"/>
</dbReference>
<dbReference type="InterPro" id="IPR002182">
    <property type="entry name" value="NB-ARC"/>
</dbReference>
<dbReference type="InterPro" id="IPR027417">
    <property type="entry name" value="P-loop_NTPase"/>
</dbReference>
<dbReference type="InterPro" id="IPR000157">
    <property type="entry name" value="TIR_dom"/>
</dbReference>
<dbReference type="InterPro" id="IPR035897">
    <property type="entry name" value="Toll_tir_struct_dom_sf"/>
</dbReference>
<dbReference type="InterPro" id="IPR036390">
    <property type="entry name" value="WH_DNA-bd_sf"/>
</dbReference>
<dbReference type="PANTHER" id="PTHR11017:SF274">
    <property type="entry name" value="ADP-RIBOSYL CYCLASE_CYCLIC ADP-RIBOSE HYDROLASE-RELATED"/>
    <property type="match status" value="1"/>
</dbReference>
<dbReference type="PANTHER" id="PTHR11017">
    <property type="entry name" value="LEUCINE-RICH REPEAT-CONTAINING PROTEIN"/>
    <property type="match status" value="1"/>
</dbReference>
<dbReference type="Pfam" id="PF20160">
    <property type="entry name" value="C-JID"/>
    <property type="match status" value="1"/>
</dbReference>
<dbReference type="Pfam" id="PF00560">
    <property type="entry name" value="LRR_1"/>
    <property type="match status" value="1"/>
</dbReference>
<dbReference type="Pfam" id="PF07725">
    <property type="entry name" value="LRR_3"/>
    <property type="match status" value="3"/>
</dbReference>
<dbReference type="Pfam" id="PF00931">
    <property type="entry name" value="NB-ARC"/>
    <property type="match status" value="1"/>
</dbReference>
<dbReference type="Pfam" id="PF01582">
    <property type="entry name" value="TIR"/>
    <property type="match status" value="1"/>
</dbReference>
<dbReference type="Pfam" id="PF23282">
    <property type="entry name" value="WHD_ROQ1"/>
    <property type="match status" value="1"/>
</dbReference>
<dbReference type="PRINTS" id="PR00364">
    <property type="entry name" value="DISEASERSIST"/>
</dbReference>
<dbReference type="SMART" id="SM00255">
    <property type="entry name" value="TIR"/>
    <property type="match status" value="1"/>
</dbReference>
<dbReference type="SUPFAM" id="SSF52058">
    <property type="entry name" value="L domain-like"/>
    <property type="match status" value="2"/>
</dbReference>
<dbReference type="SUPFAM" id="SSF52540">
    <property type="entry name" value="P-loop containing nucleoside triphosphate hydrolases"/>
    <property type="match status" value="1"/>
</dbReference>
<dbReference type="SUPFAM" id="SSF52200">
    <property type="entry name" value="Toll/Interleukin receptor TIR domain"/>
    <property type="match status" value="1"/>
</dbReference>
<dbReference type="SUPFAM" id="SSF46785">
    <property type="entry name" value="Winged helix' DNA-binding domain"/>
    <property type="match status" value="1"/>
</dbReference>
<dbReference type="PROSITE" id="PS50104">
    <property type="entry name" value="TIR"/>
    <property type="match status" value="1"/>
</dbReference>